<keyword id="KW-0256">Endoplasmic reticulum</keyword>
<keyword id="KW-0967">Endosome</keyword>
<keyword id="KW-0325">Glycoprotein</keyword>
<keyword id="KW-0458">Lysosome</keyword>
<keyword id="KW-0472">Membrane</keyword>
<keyword id="KW-0479">Metal-binding</keyword>
<keyword id="KW-0539">Nucleus</keyword>
<keyword id="KW-1185">Reference proteome</keyword>
<keyword id="KW-0732">Signal</keyword>
<keyword id="KW-0808">Transferase</keyword>
<keyword id="KW-0812">Transmembrane</keyword>
<keyword id="KW-1133">Transmembrane helix</keyword>
<keyword id="KW-0833">Ubl conjugation pathway</keyword>
<keyword id="KW-0862">Zinc</keyword>
<keyword id="KW-0863">Zinc-finger</keyword>
<dbReference type="EC" id="2.3.2.27"/>
<dbReference type="EMBL" id="X95455">
    <property type="protein sequence ID" value="CAA64725.1"/>
    <property type="molecule type" value="mRNA"/>
</dbReference>
<dbReference type="EMBL" id="AY787020">
    <property type="protein sequence ID" value="AAX14391.1"/>
    <property type="molecule type" value="Genomic_DNA"/>
</dbReference>
<dbReference type="RefSeq" id="NP_001383051.1">
    <property type="nucleotide sequence ID" value="NM_001396122.1"/>
</dbReference>
<dbReference type="RefSeq" id="NP_001383052.1">
    <property type="nucleotide sequence ID" value="NM_001396123.1"/>
</dbReference>
<dbReference type="RefSeq" id="NP_990686.1">
    <property type="nucleotide sequence ID" value="NM_205355.2"/>
</dbReference>
<dbReference type="SMR" id="Q90972"/>
<dbReference type="BioGRID" id="676561">
    <property type="interactions" value="1"/>
</dbReference>
<dbReference type="FunCoup" id="Q90972">
    <property type="interactions" value="750"/>
</dbReference>
<dbReference type="STRING" id="9031.ENSGALP00000038118"/>
<dbReference type="GlyCosmos" id="Q90972">
    <property type="glycosylation" value="1 site, No reported glycans"/>
</dbReference>
<dbReference type="GlyGen" id="Q90972">
    <property type="glycosylation" value="1 site"/>
</dbReference>
<dbReference type="PaxDb" id="9031-ENSGALP00000038118"/>
<dbReference type="Ensembl" id="ENSGALT00010002537.1">
    <property type="protein sequence ID" value="ENSGALP00010001087.1"/>
    <property type="gene ID" value="ENSGALG00010001116.1"/>
</dbReference>
<dbReference type="GeneID" id="396303"/>
<dbReference type="KEGG" id="gga:396303"/>
<dbReference type="CTD" id="11342"/>
<dbReference type="VEuPathDB" id="HostDB:geneid_396303"/>
<dbReference type="eggNOG" id="KOG4628">
    <property type="taxonomic scope" value="Eukaryota"/>
</dbReference>
<dbReference type="GeneTree" id="ENSGT00940000154942"/>
<dbReference type="HOGENOM" id="CLU_035275_1_1_1"/>
<dbReference type="InParanoid" id="Q90972"/>
<dbReference type="OMA" id="VYTIFTV"/>
<dbReference type="OrthoDB" id="8062037at2759"/>
<dbReference type="PhylomeDB" id="Q90972"/>
<dbReference type="UniPathway" id="UPA00143"/>
<dbReference type="PRO" id="PR:Q90972"/>
<dbReference type="Proteomes" id="UP000000539">
    <property type="component" value="Chromosome 9"/>
</dbReference>
<dbReference type="Bgee" id="ENSGALG00000010411">
    <property type="expression patterns" value="Expressed in lung and 13 other cell types or tissues"/>
</dbReference>
<dbReference type="GO" id="GO:0005737">
    <property type="term" value="C:cytoplasm"/>
    <property type="evidence" value="ECO:0000318"/>
    <property type="project" value="GO_Central"/>
</dbReference>
<dbReference type="GO" id="GO:0005829">
    <property type="term" value="C:cytosol"/>
    <property type="evidence" value="ECO:0007669"/>
    <property type="project" value="Ensembl"/>
</dbReference>
<dbReference type="GO" id="GO:0005783">
    <property type="term" value="C:endoplasmic reticulum"/>
    <property type="evidence" value="ECO:0000250"/>
    <property type="project" value="UniProtKB"/>
</dbReference>
<dbReference type="GO" id="GO:0005789">
    <property type="term" value="C:endoplasmic reticulum membrane"/>
    <property type="evidence" value="ECO:0007669"/>
    <property type="project" value="UniProtKB-SubCell"/>
</dbReference>
<dbReference type="GO" id="GO:0031902">
    <property type="term" value="C:late endosome membrane"/>
    <property type="evidence" value="ECO:0007669"/>
    <property type="project" value="UniProtKB-SubCell"/>
</dbReference>
<dbReference type="GO" id="GO:0005765">
    <property type="term" value="C:lysosomal membrane"/>
    <property type="evidence" value="ECO:0000318"/>
    <property type="project" value="GO_Central"/>
</dbReference>
<dbReference type="GO" id="GO:0005637">
    <property type="term" value="C:nuclear inner membrane"/>
    <property type="evidence" value="ECO:0007669"/>
    <property type="project" value="UniProtKB-SubCell"/>
</dbReference>
<dbReference type="GO" id="GO:0005654">
    <property type="term" value="C:nucleoplasm"/>
    <property type="evidence" value="ECO:0007669"/>
    <property type="project" value="Ensembl"/>
</dbReference>
<dbReference type="GO" id="GO:0008432">
    <property type="term" value="F:JUN kinase binding"/>
    <property type="evidence" value="ECO:0000250"/>
    <property type="project" value="UniProtKB"/>
</dbReference>
<dbReference type="GO" id="GO:0061630">
    <property type="term" value="F:ubiquitin protein ligase activity"/>
    <property type="evidence" value="ECO:0000318"/>
    <property type="project" value="GO_Central"/>
</dbReference>
<dbReference type="GO" id="GO:0004842">
    <property type="term" value="F:ubiquitin-protein transferase activity"/>
    <property type="evidence" value="ECO:0000250"/>
    <property type="project" value="UniProtKB"/>
</dbReference>
<dbReference type="GO" id="GO:0008270">
    <property type="term" value="F:zinc ion binding"/>
    <property type="evidence" value="ECO:0007669"/>
    <property type="project" value="UniProtKB-KW"/>
</dbReference>
<dbReference type="GO" id="GO:0051640">
    <property type="term" value="P:organelle localization"/>
    <property type="evidence" value="ECO:0007669"/>
    <property type="project" value="Ensembl"/>
</dbReference>
<dbReference type="GO" id="GO:0046330">
    <property type="term" value="P:positive regulation of JNK cascade"/>
    <property type="evidence" value="ECO:0000250"/>
    <property type="project" value="UniProtKB"/>
</dbReference>
<dbReference type="GO" id="GO:0051865">
    <property type="term" value="P:protein autoubiquitination"/>
    <property type="evidence" value="ECO:0000250"/>
    <property type="project" value="UniProtKB"/>
</dbReference>
<dbReference type="GO" id="GO:0006511">
    <property type="term" value="P:ubiquitin-dependent protein catabolic process"/>
    <property type="evidence" value="ECO:0000318"/>
    <property type="project" value="GO_Central"/>
</dbReference>
<dbReference type="CDD" id="cd02123">
    <property type="entry name" value="PA_C_RZF_like"/>
    <property type="match status" value="1"/>
</dbReference>
<dbReference type="CDD" id="cd16796">
    <property type="entry name" value="RING-H2_RNF13"/>
    <property type="match status" value="1"/>
</dbReference>
<dbReference type="FunFam" id="3.50.30.30:FF:000012">
    <property type="entry name" value="E3 ubiquitin-protein ligase RNF13"/>
    <property type="match status" value="1"/>
</dbReference>
<dbReference type="FunFam" id="3.30.40.10:FF:000099">
    <property type="entry name" value="E3 ubiquitin-protein ligase RNF167"/>
    <property type="match status" value="1"/>
</dbReference>
<dbReference type="Gene3D" id="3.50.30.30">
    <property type="match status" value="1"/>
</dbReference>
<dbReference type="Gene3D" id="3.30.40.10">
    <property type="entry name" value="Zinc/RING finger domain, C3HC4 (zinc finger)"/>
    <property type="match status" value="1"/>
</dbReference>
<dbReference type="InterPro" id="IPR051653">
    <property type="entry name" value="E3_ligase_sorting_rcpt"/>
</dbReference>
<dbReference type="InterPro" id="IPR046450">
    <property type="entry name" value="PA_dom_sf"/>
</dbReference>
<dbReference type="InterPro" id="IPR003137">
    <property type="entry name" value="PA_domain"/>
</dbReference>
<dbReference type="InterPro" id="IPR001841">
    <property type="entry name" value="Znf_RING"/>
</dbReference>
<dbReference type="InterPro" id="IPR013083">
    <property type="entry name" value="Znf_RING/FYVE/PHD"/>
</dbReference>
<dbReference type="InterPro" id="IPR044744">
    <property type="entry name" value="ZNRF4/RNF13/RNF167_PA"/>
</dbReference>
<dbReference type="PANTHER" id="PTHR47168:SF1">
    <property type="entry name" value="OS02G0798600 PROTEIN"/>
    <property type="match status" value="1"/>
</dbReference>
<dbReference type="PANTHER" id="PTHR47168">
    <property type="entry name" value="RING ZINC FINGER DOMAIN SUPERFAMILY PROTEIN-RELATED"/>
    <property type="match status" value="1"/>
</dbReference>
<dbReference type="Pfam" id="PF02225">
    <property type="entry name" value="PA"/>
    <property type="match status" value="1"/>
</dbReference>
<dbReference type="Pfam" id="PF13639">
    <property type="entry name" value="zf-RING_2"/>
    <property type="match status" value="1"/>
</dbReference>
<dbReference type="SMART" id="SM00184">
    <property type="entry name" value="RING"/>
    <property type="match status" value="1"/>
</dbReference>
<dbReference type="SUPFAM" id="SSF52025">
    <property type="entry name" value="PA domain"/>
    <property type="match status" value="1"/>
</dbReference>
<dbReference type="SUPFAM" id="SSF57850">
    <property type="entry name" value="RING/U-box"/>
    <property type="match status" value="1"/>
</dbReference>
<dbReference type="PROSITE" id="PS50089">
    <property type="entry name" value="ZF_RING_2"/>
    <property type="match status" value="1"/>
</dbReference>
<proteinExistence type="evidence at protein level"/>
<feature type="signal peptide" evidence="3">
    <location>
        <begin position="1"/>
        <end position="34"/>
    </location>
</feature>
<feature type="chain" id="PRO_0000056056" description="E3 ubiquitin-protein ligase RNF13">
    <location>
        <begin position="35"/>
        <end position="381"/>
    </location>
</feature>
<feature type="topological domain" description="Lumenal" evidence="3">
    <location>
        <begin position="35"/>
        <end position="182"/>
    </location>
</feature>
<feature type="transmembrane region" description="Helical" evidence="3">
    <location>
        <begin position="183"/>
        <end position="203"/>
    </location>
</feature>
<feature type="topological domain" description="Cytoplasmic" evidence="3">
    <location>
        <begin position="204"/>
        <end position="381"/>
    </location>
</feature>
<feature type="domain" description="PA">
    <location>
        <begin position="64"/>
        <end position="160"/>
    </location>
</feature>
<feature type="zinc finger region" description="RING-type; atypical" evidence="4">
    <location>
        <begin position="240"/>
        <end position="282"/>
    </location>
</feature>
<feature type="region of interest" description="Disordered" evidence="5">
    <location>
        <begin position="285"/>
        <end position="381"/>
    </location>
</feature>
<feature type="compositionally biased region" description="Acidic residues" evidence="5">
    <location>
        <begin position="292"/>
        <end position="305"/>
    </location>
</feature>
<feature type="compositionally biased region" description="Acidic residues" evidence="5">
    <location>
        <begin position="339"/>
        <end position="353"/>
    </location>
</feature>
<feature type="compositionally biased region" description="Basic and acidic residues" evidence="5">
    <location>
        <begin position="370"/>
        <end position="381"/>
    </location>
</feature>
<feature type="glycosylation site" description="N-linked (GlcNAc...) asparagine" evidence="3">
    <location>
        <position position="88"/>
    </location>
</feature>
<feature type="mutagenesis site" description="Decrease in E3 ligase activity. Complete loss of myoblast growth suppression activity; when associated with A-260." evidence="6">
    <original>C</original>
    <variation>A</variation>
    <location>
        <position position="258"/>
    </location>
</feature>
<feature type="mutagenesis site" description="Decrease in E3 ligase activity. Loss of myoblast growth suppression activity; when associated with A-258." evidence="6">
    <original>H</original>
    <variation>A</variation>
    <location>
        <position position="260"/>
    </location>
</feature>
<feature type="mutagenesis site" description="Decrease in E3 ligase activity. Loss of myoblast growth suppression activity." evidence="6">
    <original>W</original>
    <variation>A</variation>
    <location>
        <position position="270"/>
    </location>
</feature>
<evidence type="ECO:0000250" key="1">
    <source>
        <dbReference type="UniProtKB" id="O43567"/>
    </source>
</evidence>
<evidence type="ECO:0000250" key="2">
    <source>
        <dbReference type="UniProtKB" id="O54965"/>
    </source>
</evidence>
<evidence type="ECO:0000255" key="3"/>
<evidence type="ECO:0000255" key="4">
    <source>
        <dbReference type="PROSITE-ProRule" id="PRU00175"/>
    </source>
</evidence>
<evidence type="ECO:0000256" key="5">
    <source>
        <dbReference type="SAM" id="MobiDB-lite"/>
    </source>
</evidence>
<evidence type="ECO:0000269" key="6">
    <source>
    </source>
</evidence>
<evidence type="ECO:0000269" key="7">
    <source>
    </source>
</evidence>
<evidence type="ECO:0000269" key="8">
    <source ref="3"/>
</evidence>
<evidence type="ECO:0000303" key="9">
    <source>
    </source>
</evidence>
<evidence type="ECO:0000303" key="10">
    <source>
    </source>
</evidence>
<evidence type="ECO:0000305" key="11">
    <source>
    </source>
</evidence>
<accession>Q90972</accession>
<accession>Q533M4</accession>
<name>RNF13_CHICK</name>
<comment type="function">
    <text evidence="1 6">E3 ubiquitin-protein ligase that regulates cell proliferation (PubMed:20015074). Involved in apoptosis regulation. Mediates ER stress-induced activation of JNK signaling pathway and apoptosis by promoting ERN1 activation and splicing of XBP1 mRNA (By similarity).</text>
</comment>
<comment type="catalytic activity">
    <reaction>
        <text>S-ubiquitinyl-[E2 ubiquitin-conjugating enzyme]-L-cysteine + [acceptor protein]-L-lysine = [E2 ubiquitin-conjugating enzyme]-L-cysteine + N(6)-ubiquitinyl-[acceptor protein]-L-lysine.</text>
        <dbReference type="EC" id="2.3.2.27"/>
    </reaction>
</comment>
<comment type="pathway">
    <text evidence="1">Protein modification; protein ubiquitination.</text>
</comment>
<comment type="subcellular location">
    <subcellularLocation>
        <location evidence="1">Endoplasmic reticulum membrane</location>
        <topology evidence="3">Single-pass type I membrane protein</topology>
    </subcellularLocation>
    <subcellularLocation>
        <location evidence="2">Late endosome membrane</location>
        <topology evidence="3">Single-pass type I membrane protein</topology>
    </subcellularLocation>
    <subcellularLocation>
        <location evidence="1">Lysosome membrane</location>
        <topology evidence="3">Single-pass type I membrane protein</topology>
    </subcellularLocation>
    <subcellularLocation>
        <location evidence="11">Nucleus inner membrane</location>
        <topology evidence="3">Single-pass type I membrane protein</topology>
    </subcellularLocation>
    <text evidence="2">Under certain conditions, relocalizes to recycling endosomes and to the inner nuclear membrane.</text>
</comment>
<comment type="tissue specificity">
    <text evidence="6 7 8">Widely expressed (at protein level). Lowest levels in the liver, moderate levels in the heart, intestine and spleen, and high levels in skeletal muscle, kidney, proventriculus and brain. Also expressed in inner ear after noise exposure.</text>
</comment>
<comment type="developmental stage">
    <text evidence="6">Expressed in skeletal muscle tissue during embryonic development and for 2 weeks after hatching; becomes undetectable 3 weeks after hatching (at protein level).</text>
</comment>
<comment type="induction">
    <text evidence="6">By myostatin.</text>
</comment>
<comment type="domain">
    <text evidence="1">The RING-type zinc finger domain is required for E3 ligase activity and for promoting ER stress-induced JNK activation and apoptosis.</text>
</comment>
<reference key="1">
    <citation type="journal article" date="1996" name="Proc. Natl. Acad. Sci. U.S.A.">
        <title>Identification and characterization of a RING zinc finger gene (C-RZF) expressed in chicken embryo cells.</title>
        <authorList>
            <person name="Tranque P."/>
            <person name="Crossin K.L."/>
            <person name="Cirelli C."/>
            <person name="Edelman G.M."/>
            <person name="Mauro V.P."/>
        </authorList>
    </citation>
    <scope>NUCLEOTIDE SEQUENCE [MRNA]</scope>
    <scope>TISSUE SPECIFICITY</scope>
    <scope>SUBCELLULAR LOCATION</scope>
    <source>
        <tissue>Brain</tissue>
    </source>
</reference>
<reference key="2">
    <citation type="submission" date="2004-10" db="EMBL/GenBank/DDBJ databases">
        <title>Myostatin inhibits myoblasts proliferation by up-regulating cRNF E3 ubiquitin ligase.</title>
        <authorList>
            <person name="Wang K."/>
            <person name="Zhang Q."/>
            <person name="Yang W."/>
            <person name="Zhu D."/>
            <person name="Yu F."/>
            <person name="Zhang Y."/>
            <person name="Chen Y."/>
        </authorList>
    </citation>
    <scope>NUCLEOTIDE SEQUENCE [GENOMIC DNA]</scope>
</reference>
<reference key="3">
    <citation type="journal article" date="1998" name="Prim. Sens. Neuron">
        <title>The gene for a RING zinc finger protein is expressed in the inner chick ear after noise exposure.</title>
        <authorList>
            <person name="Lomax M.I."/>
            <person name="Warner S.J."/>
            <person name="Bersirli C.G."/>
            <person name="Gong T.-W.L."/>
        </authorList>
    </citation>
    <scope>TISSUE SPECIFICITY</scope>
</reference>
<reference key="4">
    <citation type="journal article" date="2010" name="FEBS J.">
        <title>The myostatin-induced E3 ubiquitin ligase RNF13 negatively regulates the proliferation of chicken myoblasts.</title>
        <authorList>
            <person name="Zhang Q."/>
            <person name="Wang K."/>
            <person name="Zhang Y."/>
            <person name="Meng J."/>
            <person name="Yu F."/>
            <person name="Chen Y."/>
            <person name="Zhu D."/>
        </authorList>
    </citation>
    <scope>FUNCTION</scope>
    <scope>CATALYTIC ACTIVITY</scope>
    <scope>PATHWAY</scope>
    <scope>TISSUE SPECIFICITY</scope>
    <scope>DEVELOPMENTAL STAGE</scope>
    <scope>INDUCTION BY MSTN</scope>
    <scope>MUTAGENESIS OF CYS-258; HIS-260 AND TRP-270</scope>
</reference>
<organism>
    <name type="scientific">Gallus gallus</name>
    <name type="common">Chicken</name>
    <dbReference type="NCBI Taxonomy" id="9031"/>
    <lineage>
        <taxon>Eukaryota</taxon>
        <taxon>Metazoa</taxon>
        <taxon>Chordata</taxon>
        <taxon>Craniata</taxon>
        <taxon>Vertebrata</taxon>
        <taxon>Euteleostomi</taxon>
        <taxon>Archelosauria</taxon>
        <taxon>Archosauria</taxon>
        <taxon>Dinosauria</taxon>
        <taxon>Saurischia</taxon>
        <taxon>Theropoda</taxon>
        <taxon>Coelurosauria</taxon>
        <taxon>Aves</taxon>
        <taxon>Neognathae</taxon>
        <taxon>Galloanserae</taxon>
        <taxon>Galliformes</taxon>
        <taxon>Phasianidae</taxon>
        <taxon>Phasianinae</taxon>
        <taxon>Gallus</taxon>
    </lineage>
</organism>
<gene>
    <name evidence="9" type="primary">RNF13</name>
    <name evidence="10" type="synonym">RZF</name>
</gene>
<protein>
    <recommendedName>
        <fullName>E3 ubiquitin-protein ligase RNF13</fullName>
        <ecNumber>2.3.2.27</ecNumber>
    </recommendedName>
    <alternativeName>
        <fullName evidence="10">C-RZF</fullName>
    </alternativeName>
    <alternativeName>
        <fullName>RING finger protein 13</fullName>
    </alternativeName>
</protein>
<sequence length="381" mass="42820">MLLSIGMLMLSATQIYTIVTVQLFAFLNLLPVEADILAYNFENGTQTFDDLPARFGYRLPAEGLKGFLINSKPENACEPIAPPPLRDNSSTAFIVLIRRLECNFDIKVLNAQRAGYKAAIVHNVDSDDLISMGSNDIEILKKIDIPSVFIGEASANSLKEEFTYEKGGHVVLIPEFSLPLEYYLIPFLIIVGICLILIVIFMITKFVQDRHRARRNRLRKDQLKKLPVHKFKKGDEYDVCAICLDEYEDGDKLRILPCSHAYHCKCVDPWLTKTKKTCPVCKQKVVPSQGDSDSETDSSQEENEVSENTPLLRPLASVSTQSFGALSESHSHQNMTESSEYEEDDNDNIDSSDAESGVNEESVVVQLQPNDERDYRVTNTV</sequence>